<sequence>MGLEEQLPGGILLSTVEKVAGYVRKNSLWPATFGLACCAIEMMATAGPRFDIARFGMERFSATPRQADLMIVAGRVSQKMAPVLRQIYDQMAEPKWVLAMGVCASSGGMFNNYAIVQGVDHVVPVDIYLPGCPPRPEMLLYAILKLHEKIQQMPLGVNRETAIAEAEQAALSARPTIEMRGLLR</sequence>
<comment type="function">
    <text evidence="1">NDH-1 shuttles electrons from NADH, via FMN and iron-sulfur (Fe-S) centers, to quinones in the respiratory chain. The immediate electron acceptor for the enzyme in this species is believed to be a menaquinone. Couples the redox reaction to proton translocation (for every two electrons transferred, four hydrogen ions are translocated across the cytoplasmic membrane), and thus conserves the redox energy in a proton gradient.</text>
</comment>
<comment type="catalytic activity">
    <reaction evidence="1">
        <text>a quinone + NADH + 5 H(+)(in) = a quinol + NAD(+) + 4 H(+)(out)</text>
        <dbReference type="Rhea" id="RHEA:57888"/>
        <dbReference type="ChEBI" id="CHEBI:15378"/>
        <dbReference type="ChEBI" id="CHEBI:24646"/>
        <dbReference type="ChEBI" id="CHEBI:57540"/>
        <dbReference type="ChEBI" id="CHEBI:57945"/>
        <dbReference type="ChEBI" id="CHEBI:132124"/>
    </reaction>
</comment>
<comment type="cofactor">
    <cofactor evidence="1">
        <name>[4Fe-4S] cluster</name>
        <dbReference type="ChEBI" id="CHEBI:49883"/>
    </cofactor>
    <text evidence="1">Binds 1 [4Fe-4S] cluster.</text>
</comment>
<comment type="subunit">
    <text evidence="1">NDH-1 is composed of 14 different subunits. Subunits NuoB, C, D, E, F, and G constitute the peripheral sector of the complex.</text>
</comment>
<comment type="subcellular location">
    <subcellularLocation>
        <location evidence="1">Cell membrane</location>
        <topology evidence="1">Peripheral membrane protein</topology>
        <orientation evidence="1">Cytoplasmic side</orientation>
    </subcellularLocation>
</comment>
<comment type="similarity">
    <text evidence="1">Belongs to the complex I 20 kDa subunit family.</text>
</comment>
<organism>
    <name type="scientific">Mycolicibacterium paratuberculosis (strain ATCC BAA-968 / K-10)</name>
    <name type="common">Mycobacterium paratuberculosis</name>
    <dbReference type="NCBI Taxonomy" id="262316"/>
    <lineage>
        <taxon>Bacteria</taxon>
        <taxon>Bacillati</taxon>
        <taxon>Actinomycetota</taxon>
        <taxon>Actinomycetes</taxon>
        <taxon>Mycobacteriales</taxon>
        <taxon>Mycobacteriaceae</taxon>
        <taxon>Mycobacterium</taxon>
        <taxon>Mycobacterium avium complex (MAC)</taxon>
    </lineage>
</organism>
<name>NUOB_MYCPA</name>
<proteinExistence type="inferred from homology"/>
<keyword id="KW-0004">4Fe-4S</keyword>
<keyword id="KW-1003">Cell membrane</keyword>
<keyword id="KW-0408">Iron</keyword>
<keyword id="KW-0411">Iron-sulfur</keyword>
<keyword id="KW-0472">Membrane</keyword>
<keyword id="KW-0479">Metal-binding</keyword>
<keyword id="KW-0520">NAD</keyword>
<keyword id="KW-0874">Quinone</keyword>
<keyword id="KW-1185">Reference proteome</keyword>
<keyword id="KW-1278">Translocase</keyword>
<keyword id="KW-0813">Transport</keyword>
<accession>Q73V14</accession>
<dbReference type="EC" id="7.1.1.-" evidence="1"/>
<dbReference type="EMBL" id="AE016958">
    <property type="protein sequence ID" value="AAS05750.1"/>
    <property type="molecule type" value="Genomic_DNA"/>
</dbReference>
<dbReference type="RefSeq" id="WP_003874821.1">
    <property type="nucleotide sequence ID" value="NZ_CP106873.1"/>
</dbReference>
<dbReference type="SMR" id="Q73V14"/>
<dbReference type="STRING" id="262316.MAP_3202"/>
<dbReference type="KEGG" id="mpa:MAP_3202"/>
<dbReference type="eggNOG" id="COG0377">
    <property type="taxonomic scope" value="Bacteria"/>
</dbReference>
<dbReference type="HOGENOM" id="CLU_055737_7_3_11"/>
<dbReference type="Proteomes" id="UP000000580">
    <property type="component" value="Chromosome"/>
</dbReference>
<dbReference type="GO" id="GO:0005886">
    <property type="term" value="C:plasma membrane"/>
    <property type="evidence" value="ECO:0007669"/>
    <property type="project" value="UniProtKB-SubCell"/>
</dbReference>
<dbReference type="GO" id="GO:0045271">
    <property type="term" value="C:respiratory chain complex I"/>
    <property type="evidence" value="ECO:0007669"/>
    <property type="project" value="TreeGrafter"/>
</dbReference>
<dbReference type="GO" id="GO:0051539">
    <property type="term" value="F:4 iron, 4 sulfur cluster binding"/>
    <property type="evidence" value="ECO:0007669"/>
    <property type="project" value="UniProtKB-KW"/>
</dbReference>
<dbReference type="GO" id="GO:0005506">
    <property type="term" value="F:iron ion binding"/>
    <property type="evidence" value="ECO:0007669"/>
    <property type="project" value="UniProtKB-UniRule"/>
</dbReference>
<dbReference type="GO" id="GO:0008137">
    <property type="term" value="F:NADH dehydrogenase (ubiquinone) activity"/>
    <property type="evidence" value="ECO:0007669"/>
    <property type="project" value="InterPro"/>
</dbReference>
<dbReference type="GO" id="GO:0050136">
    <property type="term" value="F:NADH:ubiquinone reductase (non-electrogenic) activity"/>
    <property type="evidence" value="ECO:0007669"/>
    <property type="project" value="UniProtKB-UniRule"/>
</dbReference>
<dbReference type="GO" id="GO:0048038">
    <property type="term" value="F:quinone binding"/>
    <property type="evidence" value="ECO:0007669"/>
    <property type="project" value="UniProtKB-KW"/>
</dbReference>
<dbReference type="GO" id="GO:0009060">
    <property type="term" value="P:aerobic respiration"/>
    <property type="evidence" value="ECO:0007669"/>
    <property type="project" value="TreeGrafter"/>
</dbReference>
<dbReference type="GO" id="GO:0015990">
    <property type="term" value="P:electron transport coupled proton transport"/>
    <property type="evidence" value="ECO:0007669"/>
    <property type="project" value="TreeGrafter"/>
</dbReference>
<dbReference type="FunFam" id="3.40.50.12280:FF:000004">
    <property type="entry name" value="NADH-quinone oxidoreductase subunit B"/>
    <property type="match status" value="1"/>
</dbReference>
<dbReference type="Gene3D" id="3.40.50.12280">
    <property type="match status" value="1"/>
</dbReference>
<dbReference type="HAMAP" id="MF_01356">
    <property type="entry name" value="NDH1_NuoB"/>
    <property type="match status" value="1"/>
</dbReference>
<dbReference type="InterPro" id="IPR006137">
    <property type="entry name" value="NADH_UbQ_OxRdtase-like_20kDa"/>
</dbReference>
<dbReference type="InterPro" id="IPR006138">
    <property type="entry name" value="NADH_UQ_OxRdtase_20Kd_su"/>
</dbReference>
<dbReference type="NCBIfam" id="TIGR01957">
    <property type="entry name" value="nuoB_fam"/>
    <property type="match status" value="1"/>
</dbReference>
<dbReference type="NCBIfam" id="NF005012">
    <property type="entry name" value="PRK06411.1"/>
    <property type="match status" value="1"/>
</dbReference>
<dbReference type="PANTHER" id="PTHR11995">
    <property type="entry name" value="NADH DEHYDROGENASE"/>
    <property type="match status" value="1"/>
</dbReference>
<dbReference type="PANTHER" id="PTHR11995:SF14">
    <property type="entry name" value="NADH DEHYDROGENASE [UBIQUINONE] IRON-SULFUR PROTEIN 7, MITOCHONDRIAL"/>
    <property type="match status" value="1"/>
</dbReference>
<dbReference type="Pfam" id="PF01058">
    <property type="entry name" value="Oxidored_q6"/>
    <property type="match status" value="1"/>
</dbReference>
<dbReference type="SUPFAM" id="SSF56770">
    <property type="entry name" value="HydA/Nqo6-like"/>
    <property type="match status" value="1"/>
</dbReference>
<dbReference type="PROSITE" id="PS01150">
    <property type="entry name" value="COMPLEX1_20K"/>
    <property type="match status" value="1"/>
</dbReference>
<feature type="chain" id="PRO_0000376280" description="NADH-quinone oxidoreductase subunit B">
    <location>
        <begin position="1"/>
        <end position="184"/>
    </location>
</feature>
<feature type="binding site" evidence="1">
    <location>
        <position position="37"/>
    </location>
    <ligand>
        <name>[4Fe-4S] cluster</name>
        <dbReference type="ChEBI" id="CHEBI:49883"/>
    </ligand>
</feature>
<feature type="binding site" evidence="1">
    <location>
        <position position="38"/>
    </location>
    <ligand>
        <name>[4Fe-4S] cluster</name>
        <dbReference type="ChEBI" id="CHEBI:49883"/>
    </ligand>
</feature>
<feature type="binding site" evidence="1">
    <location>
        <position position="103"/>
    </location>
    <ligand>
        <name>[4Fe-4S] cluster</name>
        <dbReference type="ChEBI" id="CHEBI:49883"/>
    </ligand>
</feature>
<feature type="binding site" evidence="1">
    <location>
        <position position="132"/>
    </location>
    <ligand>
        <name>[4Fe-4S] cluster</name>
        <dbReference type="ChEBI" id="CHEBI:49883"/>
    </ligand>
</feature>
<evidence type="ECO:0000255" key="1">
    <source>
        <dbReference type="HAMAP-Rule" id="MF_01356"/>
    </source>
</evidence>
<protein>
    <recommendedName>
        <fullName evidence="1">NADH-quinone oxidoreductase subunit B</fullName>
        <ecNumber evidence="1">7.1.1.-</ecNumber>
    </recommendedName>
    <alternativeName>
        <fullName evidence="1">NADH dehydrogenase I subunit B</fullName>
    </alternativeName>
    <alternativeName>
        <fullName evidence="1">NDH-1 subunit B</fullName>
    </alternativeName>
</protein>
<gene>
    <name evidence="1" type="primary">nuoB</name>
    <name type="ordered locus">MAP_3202</name>
</gene>
<reference key="1">
    <citation type="journal article" date="2005" name="Proc. Natl. Acad. Sci. U.S.A.">
        <title>The complete genome sequence of Mycobacterium avium subspecies paratuberculosis.</title>
        <authorList>
            <person name="Li L."/>
            <person name="Bannantine J.P."/>
            <person name="Zhang Q."/>
            <person name="Amonsin A."/>
            <person name="May B.J."/>
            <person name="Alt D."/>
            <person name="Banerji N."/>
            <person name="Kanjilal S."/>
            <person name="Kapur V."/>
        </authorList>
    </citation>
    <scope>NUCLEOTIDE SEQUENCE [LARGE SCALE GENOMIC DNA]</scope>
    <source>
        <strain>ATCC BAA-968 / K-10</strain>
    </source>
</reference>